<proteinExistence type="inferred from homology"/>
<comment type="function">
    <text evidence="1">Component of the cytochrome b6-f complex, which mediates electron transfer between photosystem II (PSII) and photosystem I (PSI), cyclic electron flow around PSI, and state transitions. PetG is required for either the stability or assembly of the cytochrome b6-f complex.</text>
</comment>
<comment type="subunit">
    <text evidence="1">The 4 large subunits of the cytochrome b6-f complex are cytochrome b6, subunit IV (17 kDa polypeptide, PetD), cytochrome f and the Rieske protein, while the 4 small subunits are PetG, PetL, PetM and PetN. The complex functions as a dimer.</text>
</comment>
<comment type="subcellular location">
    <subcellularLocation>
        <location evidence="1">Plastid</location>
        <location evidence="1">Chloroplast thylakoid membrane</location>
        <topology evidence="1">Single-pass membrane protein</topology>
    </subcellularLocation>
</comment>
<comment type="similarity">
    <text evidence="1">Belongs to the PetG family.</text>
</comment>
<reference key="1">
    <citation type="journal article" date="2008" name="Nucleic Acids Res.">
        <title>The complete nucleotide sequences of the five genetically distinct plastid genomes of Oenothera, subsection Oenothera: I. Sequence evaluation and plastome evolution.</title>
        <authorList>
            <person name="Greiner S."/>
            <person name="Wang X."/>
            <person name="Rauwolf U."/>
            <person name="Silber M.V."/>
            <person name="Mayer K."/>
            <person name="Meurer J."/>
            <person name="Haberer G."/>
            <person name="Herrmann R.G."/>
        </authorList>
    </citation>
    <scope>NUCLEOTIDE SEQUENCE [LARGE SCALE GENOMIC DNA]</scope>
    <source>
        <strain>cv. Rr-lamarckiana Sweden</strain>
    </source>
</reference>
<organism>
    <name type="scientific">Oenothera glazioviana</name>
    <name type="common">Large-flowered evening primrose</name>
    <name type="synonym">Oenothera erythrosepala</name>
    <dbReference type="NCBI Taxonomy" id="482428"/>
    <lineage>
        <taxon>Eukaryota</taxon>
        <taxon>Viridiplantae</taxon>
        <taxon>Streptophyta</taxon>
        <taxon>Embryophyta</taxon>
        <taxon>Tracheophyta</taxon>
        <taxon>Spermatophyta</taxon>
        <taxon>Magnoliopsida</taxon>
        <taxon>eudicotyledons</taxon>
        <taxon>Gunneridae</taxon>
        <taxon>Pentapetalae</taxon>
        <taxon>rosids</taxon>
        <taxon>malvids</taxon>
        <taxon>Myrtales</taxon>
        <taxon>Onagraceae</taxon>
        <taxon>Onagroideae</taxon>
        <taxon>Onagreae</taxon>
        <taxon>Oenothera</taxon>
    </lineage>
</organism>
<keyword id="KW-0150">Chloroplast</keyword>
<keyword id="KW-0249">Electron transport</keyword>
<keyword id="KW-0472">Membrane</keyword>
<keyword id="KW-0602">Photosynthesis</keyword>
<keyword id="KW-0934">Plastid</keyword>
<keyword id="KW-0793">Thylakoid</keyword>
<keyword id="KW-0812">Transmembrane</keyword>
<keyword id="KW-1133">Transmembrane helix</keyword>
<keyword id="KW-0813">Transport</keyword>
<protein>
    <recommendedName>
        <fullName evidence="1">Cytochrome b6-f complex subunit 5</fullName>
    </recommendedName>
    <alternativeName>
        <fullName evidence="1">Cytochrome b6-f complex subunit PetG</fullName>
    </alternativeName>
    <alternativeName>
        <fullName evidence="1">Cytochrome b6-f complex subunit V</fullName>
    </alternativeName>
</protein>
<evidence type="ECO:0000255" key="1">
    <source>
        <dbReference type="HAMAP-Rule" id="MF_00432"/>
    </source>
</evidence>
<name>PETG_OENGL</name>
<gene>
    <name evidence="1" type="primary">petG</name>
</gene>
<sequence length="37" mass="4170">MIEVFLFGIVLGLIPITLAGLFVTAYLQYRRGDQLDL</sequence>
<dbReference type="EMBL" id="EU262890">
    <property type="protein sequence ID" value="ABX10056.1"/>
    <property type="molecule type" value="Genomic_DNA"/>
</dbReference>
<dbReference type="RefSeq" id="YP_001687302.1">
    <property type="nucleotide sequence ID" value="NC_010360.2"/>
</dbReference>
<dbReference type="SMR" id="B0Z563"/>
<dbReference type="GeneID" id="5955351"/>
<dbReference type="GO" id="GO:0009535">
    <property type="term" value="C:chloroplast thylakoid membrane"/>
    <property type="evidence" value="ECO:0007669"/>
    <property type="project" value="UniProtKB-SubCell"/>
</dbReference>
<dbReference type="GO" id="GO:0009512">
    <property type="term" value="C:cytochrome b6f complex"/>
    <property type="evidence" value="ECO:0007669"/>
    <property type="project" value="InterPro"/>
</dbReference>
<dbReference type="GO" id="GO:0045158">
    <property type="term" value="F:electron transporter, transferring electrons within cytochrome b6/f complex of photosystem II activity"/>
    <property type="evidence" value="ECO:0007669"/>
    <property type="project" value="UniProtKB-UniRule"/>
</dbReference>
<dbReference type="GO" id="GO:0017004">
    <property type="term" value="P:cytochrome complex assembly"/>
    <property type="evidence" value="ECO:0007669"/>
    <property type="project" value="UniProtKB-UniRule"/>
</dbReference>
<dbReference type="GO" id="GO:0015979">
    <property type="term" value="P:photosynthesis"/>
    <property type="evidence" value="ECO:0007669"/>
    <property type="project" value="UniProtKB-KW"/>
</dbReference>
<dbReference type="HAMAP" id="MF_00432">
    <property type="entry name" value="Cytb6_f_PetG"/>
    <property type="match status" value="1"/>
</dbReference>
<dbReference type="InterPro" id="IPR003683">
    <property type="entry name" value="Cyt_6/f_cplx_su5"/>
</dbReference>
<dbReference type="InterPro" id="IPR036099">
    <property type="entry name" value="Cyt_6/f_cplx_su5_sf"/>
</dbReference>
<dbReference type="NCBIfam" id="NF001907">
    <property type="entry name" value="PRK00665.1"/>
    <property type="match status" value="1"/>
</dbReference>
<dbReference type="Pfam" id="PF02529">
    <property type="entry name" value="PetG"/>
    <property type="match status" value="1"/>
</dbReference>
<dbReference type="PIRSF" id="PIRSF000034">
    <property type="entry name" value="Cyt_b6-f_V"/>
    <property type="match status" value="1"/>
</dbReference>
<dbReference type="SUPFAM" id="SSF103446">
    <property type="entry name" value="PetG subunit of the cytochrome b6f complex"/>
    <property type="match status" value="1"/>
</dbReference>
<feature type="chain" id="PRO_0000355404" description="Cytochrome b6-f complex subunit 5">
    <location>
        <begin position="1"/>
        <end position="37"/>
    </location>
</feature>
<feature type="transmembrane region" description="Helical" evidence="1">
    <location>
        <begin position="5"/>
        <end position="25"/>
    </location>
</feature>
<geneLocation type="chloroplast"/>
<accession>B0Z563</accession>